<accession>Q05778</accession>
<accession>D6VYK1</accession>
<evidence type="ECO:0000269" key="1">
    <source>
    </source>
</evidence>
<evidence type="ECO:0000269" key="2">
    <source>
    </source>
</evidence>
<evidence type="ECO:0000269" key="3">
    <source>
    </source>
</evidence>
<evidence type="ECO:0000269" key="4">
    <source>
    </source>
</evidence>
<evidence type="ECO:0000305" key="5"/>
<evidence type="ECO:0000312" key="6">
    <source>
        <dbReference type="EMBL" id="AAB67437.1"/>
    </source>
</evidence>
<evidence type="ECO:0007829" key="7">
    <source>
        <dbReference type="PDB" id="8RVL"/>
    </source>
</evidence>
<evidence type="ECO:0007829" key="8">
    <source>
        <dbReference type="PDB" id="8RVP"/>
    </source>
</evidence>
<organism>
    <name type="scientific">Saccharomyces cerevisiae (strain ATCC 204508 / S288c)</name>
    <name type="common">Baker's yeast</name>
    <dbReference type="NCBI Taxonomy" id="559292"/>
    <lineage>
        <taxon>Eukaryota</taxon>
        <taxon>Fungi</taxon>
        <taxon>Dikarya</taxon>
        <taxon>Ascomycota</taxon>
        <taxon>Saccharomycotina</taxon>
        <taxon>Saccharomycetes</taxon>
        <taxon>Saccharomycetales</taxon>
        <taxon>Saccharomycetaceae</taxon>
        <taxon>Saccharomyces</taxon>
    </lineage>
</organism>
<sequence>MLFKQWNDLPEPKHLLDLPEISKNLQSLEVCPVPKVEFPQDLDVPQYSTAVITTKIMNPLFPKNLLQLTSIGEIKTTLTVKSPSLPQSSGKHSWNYDENFPNEVDPDQKNDTADETVYGFSFPIYSFGKTLLFSMEENFISISPIFGNMISRSIISQLAQFSPDIIVIGTSDKIASMKVMTENECTLQPPEFITGFIGSVLTQLIVGPSKGLKFKCLVAPSEGPNGFEKLSLSDMGSLVDLCGQWLGFEPSRYSEECYRLWRCDSAAIGAQSGLYI</sequence>
<protein>
    <recommendedName>
        <fullName>Proteasome chaperone 1</fullName>
    </recommendedName>
    <alternativeName>
        <fullName>Proteasome biogenesis-associated protein 1</fullName>
    </alternativeName>
</protein>
<reference evidence="6" key="1">
    <citation type="journal article" date="1997" name="Nature">
        <title>The nucleotide sequence of Saccharomyces cerevisiae chromosome XII.</title>
        <authorList>
            <person name="Johnston M."/>
            <person name="Hillier L.W."/>
            <person name="Riles L."/>
            <person name="Albermann K."/>
            <person name="Andre B."/>
            <person name="Ansorge W."/>
            <person name="Benes V."/>
            <person name="Brueckner M."/>
            <person name="Delius H."/>
            <person name="Dubois E."/>
            <person name="Duesterhoeft A."/>
            <person name="Entian K.-D."/>
            <person name="Floeth M."/>
            <person name="Goffeau A."/>
            <person name="Hebling U."/>
            <person name="Heumann K."/>
            <person name="Heuss-Neitzel D."/>
            <person name="Hilbert H."/>
            <person name="Hilger F."/>
            <person name="Kleine K."/>
            <person name="Koetter P."/>
            <person name="Louis E.J."/>
            <person name="Messenguy F."/>
            <person name="Mewes H.-W."/>
            <person name="Miosga T."/>
            <person name="Moestl D."/>
            <person name="Mueller-Auer S."/>
            <person name="Nentwich U."/>
            <person name="Obermaier B."/>
            <person name="Piravandi E."/>
            <person name="Pohl T.M."/>
            <person name="Portetelle D."/>
            <person name="Purnelle B."/>
            <person name="Rechmann S."/>
            <person name="Rieger M."/>
            <person name="Rinke M."/>
            <person name="Rose M."/>
            <person name="Scharfe M."/>
            <person name="Scherens B."/>
            <person name="Scholler P."/>
            <person name="Schwager C."/>
            <person name="Schwarz S."/>
            <person name="Underwood A.P."/>
            <person name="Urrestarazu L.A."/>
            <person name="Vandenbol M."/>
            <person name="Verhasselt P."/>
            <person name="Vierendeels F."/>
            <person name="Voet M."/>
            <person name="Volckaert G."/>
            <person name="Voss H."/>
            <person name="Wambutt R."/>
            <person name="Wedler E."/>
            <person name="Wedler H."/>
            <person name="Zimmermann F.K."/>
            <person name="Zollner A."/>
            <person name="Hani J."/>
            <person name="Hoheisel J.D."/>
        </authorList>
    </citation>
    <scope>NUCLEOTIDE SEQUENCE [LARGE SCALE GENOMIC DNA]</scope>
    <source>
        <strain>ATCC 204508 / S288c</strain>
    </source>
</reference>
<reference key="2">
    <citation type="journal article" date="2014" name="G3 (Bethesda)">
        <title>The reference genome sequence of Saccharomyces cerevisiae: Then and now.</title>
        <authorList>
            <person name="Engel S.R."/>
            <person name="Dietrich F.S."/>
            <person name="Fisk D.G."/>
            <person name="Binkley G."/>
            <person name="Balakrishnan R."/>
            <person name="Costanzo M.C."/>
            <person name="Dwight S.S."/>
            <person name="Hitz B.C."/>
            <person name="Karra K."/>
            <person name="Nash R.S."/>
            <person name="Weng S."/>
            <person name="Wong E.D."/>
            <person name="Lloyd P."/>
            <person name="Skrzypek M.S."/>
            <person name="Miyasato S.R."/>
            <person name="Simison M."/>
            <person name="Cherry J.M."/>
        </authorList>
    </citation>
    <scope>GENOME REANNOTATION</scope>
    <source>
        <strain>ATCC 204508 / S288c</strain>
    </source>
</reference>
<reference key="3">
    <citation type="journal article" date="2007" name="EMBO J.">
        <title>Beta-subunit appendages promote 20S proteasome assembly by overcoming an Ump1-dependent checkpoint.</title>
        <authorList>
            <person name="Li X."/>
            <person name="Kusmierczyk A.R."/>
            <person name="Wong P."/>
            <person name="Emili A."/>
            <person name="Hochstrasser M."/>
        </authorList>
    </citation>
    <scope>PROTEIN SEQUENCE OF 5-23; 35-75; 92-108 AND 110-174</scope>
    <scope>GENE NAME</scope>
    <scope>INTERACTION WITH ADD66</scope>
    <scope>SUBUNIT</scope>
    <scope>IDENTIFICATION BY MASS SPECTROMETRY</scope>
</reference>
<reference evidence="5" key="4">
    <citation type="journal article" date="2003" name="Nature">
        <title>Global analysis of protein localization in budding yeast.</title>
        <authorList>
            <person name="Huh W.-K."/>
            <person name="Falvo J.V."/>
            <person name="Gerke L.C."/>
            <person name="Carroll A.S."/>
            <person name="Howson R.W."/>
            <person name="Weissman J.S."/>
            <person name="O'Shea E.K."/>
        </authorList>
    </citation>
    <scope>SUBCELLULAR LOCATION [LARGE SCALE ANALYSIS]</scope>
</reference>
<reference evidence="5" key="5">
    <citation type="journal article" date="2003" name="Nature">
        <title>Global analysis of protein expression in yeast.</title>
        <authorList>
            <person name="Ghaemmaghami S."/>
            <person name="Huh W.-K."/>
            <person name="Bower K."/>
            <person name="Howson R.W."/>
            <person name="Belle A."/>
            <person name="Dephoure N."/>
            <person name="O'Shea E.K."/>
            <person name="Weissman J.S."/>
        </authorList>
    </citation>
    <scope>LEVEL OF PROTEIN EXPRESSION [LARGE SCALE ANALYSIS]</scope>
</reference>
<reference evidence="5" key="6">
    <citation type="journal article" date="2003" name="Science">
        <title>Finding functional features in Saccharomyces genomes by phylogenetic footprinting.</title>
        <authorList>
            <person name="Cliften P.F."/>
            <person name="Sudarsanam P."/>
            <person name="Desikan A."/>
            <person name="Fulton L."/>
            <person name="Fulton B."/>
            <person name="Majors J."/>
            <person name="Waterston R."/>
            <person name="Cohen B.A."/>
            <person name="Johnston M."/>
        </authorList>
    </citation>
    <scope>REVISION OF GENE MODEL</scope>
</reference>
<reference key="7">
    <citation type="journal article" date="2007" name="Mol. Cell">
        <title>20S proteasome assembly is orchestrated by two distinct pairs of chaperones in yeast and in mammals.</title>
        <authorList>
            <person name="Le Tallec B."/>
            <person name="Barrault M.-B."/>
            <person name="Courbeyrette R."/>
            <person name="Guerois R."/>
            <person name="Marsolier-Kergoat M.-C."/>
            <person name="Peyroche A."/>
        </authorList>
    </citation>
    <scope>GENE NAME</scope>
    <scope>FUNCTION</scope>
    <scope>INTERACTION WITH ADD66</scope>
    <scope>SUBUNIT</scope>
</reference>
<keyword id="KW-0002">3D-structure</keyword>
<keyword id="KW-0143">Chaperone</keyword>
<keyword id="KW-0963">Cytoplasm</keyword>
<keyword id="KW-0903">Direct protein sequencing</keyword>
<keyword id="KW-1185">Reference proteome</keyword>
<comment type="function">
    <text evidence="4">Involved in 20S proteasome assembly.</text>
</comment>
<comment type="subunit">
    <text evidence="3 4">Component of the 20S proteasome chaperone. Forms a heterodimer with ADD66 that binds to proteasome precursors.</text>
</comment>
<comment type="interaction">
    <interactant intactId="EBI-33792">
        <id>Q05778</id>
    </interactant>
    <interactant intactId="EBI-27001">
        <id>P36040</id>
        <label>ADD66</label>
    </interactant>
    <organismsDiffer>false</organismsDiffer>
    <experiments>3</experiments>
</comment>
<comment type="interaction">
    <interactant intactId="EBI-33792">
        <id>Q05778</id>
    </interactant>
    <interactant intactId="EBI-20093">
        <id>P38293</id>
        <label>UMP1</label>
    </interactant>
    <organismsDiffer>false</organismsDiffer>
    <experiments>2</experiments>
</comment>
<comment type="subcellular location">
    <subcellularLocation>
        <location evidence="1">Cytoplasm</location>
    </subcellularLocation>
</comment>
<comment type="miscellaneous">
    <text evidence="2">Present with 1350 molecules/cell in log phase SD medium.</text>
</comment>
<comment type="similarity">
    <text evidence="5">Belongs to the PSMG1 family.</text>
</comment>
<comment type="sequence caution" evidence="5">
    <conflict type="erroneous gene model prediction">
        <sequence resource="EMBL-CDS" id="AAB67437"/>
    </conflict>
</comment>
<feature type="chain" id="PRO_0000203234" description="Proteasome chaperone 1">
    <location>
        <begin position="1"/>
        <end position="276"/>
    </location>
</feature>
<feature type="strand" evidence="7">
    <location>
        <begin position="13"/>
        <end position="15"/>
    </location>
</feature>
<feature type="strand" evidence="7">
    <location>
        <begin position="35"/>
        <end position="37"/>
    </location>
</feature>
<feature type="helix" evidence="7">
    <location>
        <begin position="44"/>
        <end position="46"/>
    </location>
</feature>
<feature type="strand" evidence="7">
    <location>
        <begin position="48"/>
        <end position="54"/>
    </location>
</feature>
<feature type="helix" evidence="7">
    <location>
        <begin position="55"/>
        <end position="60"/>
    </location>
</feature>
<feature type="helix" evidence="7">
    <location>
        <begin position="63"/>
        <end position="66"/>
    </location>
</feature>
<feature type="strand" evidence="7">
    <location>
        <begin position="69"/>
        <end position="78"/>
    </location>
</feature>
<feature type="strand" evidence="7">
    <location>
        <begin position="118"/>
        <end position="127"/>
    </location>
</feature>
<feature type="strand" evidence="7">
    <location>
        <begin position="130"/>
        <end position="135"/>
    </location>
</feature>
<feature type="turn" evidence="7">
    <location>
        <begin position="139"/>
        <end position="141"/>
    </location>
</feature>
<feature type="helix" evidence="7">
    <location>
        <begin position="144"/>
        <end position="158"/>
    </location>
</feature>
<feature type="turn" evidence="7">
    <location>
        <begin position="159"/>
        <end position="161"/>
    </location>
</feature>
<feature type="strand" evidence="7">
    <location>
        <begin position="164"/>
        <end position="170"/>
    </location>
</feature>
<feature type="strand" evidence="7">
    <location>
        <begin position="178"/>
        <end position="181"/>
    </location>
</feature>
<feature type="strand" evidence="7">
    <location>
        <begin position="193"/>
        <end position="195"/>
    </location>
</feature>
<feature type="helix" evidence="7">
    <location>
        <begin position="196"/>
        <end position="206"/>
    </location>
</feature>
<feature type="turn" evidence="8">
    <location>
        <begin position="208"/>
        <end position="211"/>
    </location>
</feature>
<feature type="strand" evidence="7">
    <location>
        <begin position="215"/>
        <end position="219"/>
    </location>
</feature>
<feature type="strand" evidence="8">
    <location>
        <begin position="222"/>
        <end position="224"/>
    </location>
</feature>
<feature type="helix" evidence="7">
    <location>
        <begin position="232"/>
        <end position="246"/>
    </location>
</feature>
<feature type="helix" evidence="7">
    <location>
        <begin position="250"/>
        <end position="261"/>
    </location>
</feature>
<feature type="turn" evidence="7">
    <location>
        <begin position="262"/>
        <end position="264"/>
    </location>
</feature>
<feature type="helix" evidence="7">
    <location>
        <begin position="266"/>
        <end position="268"/>
    </location>
</feature>
<feature type="helix" evidence="7">
    <location>
        <begin position="271"/>
        <end position="274"/>
    </location>
</feature>
<proteinExistence type="evidence at protein level"/>
<dbReference type="EMBL" id="U14913">
    <property type="protein sequence ID" value="AAB67437.1"/>
    <property type="status" value="ALT_SEQ"/>
    <property type="molecule type" value="Genomic_DNA"/>
</dbReference>
<dbReference type="EMBL" id="BK006945">
    <property type="protein sequence ID" value="DAA09517.1"/>
    <property type="molecule type" value="Genomic_DNA"/>
</dbReference>
<dbReference type="PIR" id="S48551">
    <property type="entry name" value="S48551"/>
</dbReference>
<dbReference type="RefSeq" id="NP_013300.2">
    <property type="nucleotide sequence ID" value="NM_001182086.1"/>
</dbReference>
<dbReference type="PDB" id="4G4S">
    <property type="method" value="X-ray"/>
    <property type="resolution" value="2.49 A"/>
    <property type="chains" value="O=1-276"/>
</dbReference>
<dbReference type="PDB" id="7LS6">
    <property type="method" value="EM"/>
    <property type="resolution" value="3.17 A"/>
    <property type="chains" value="O=1-276"/>
</dbReference>
<dbReference type="PDB" id="7LSX">
    <property type="method" value="EM"/>
    <property type="resolution" value="3.61 A"/>
    <property type="chains" value="O=1-276"/>
</dbReference>
<dbReference type="PDB" id="8RVL">
    <property type="method" value="EM"/>
    <property type="resolution" value="2.14 A"/>
    <property type="chains" value="4/7=1-276"/>
</dbReference>
<dbReference type="PDB" id="8RVO">
    <property type="method" value="EM"/>
    <property type="resolution" value="2.69 A"/>
    <property type="chains" value="4/7=1-276"/>
</dbReference>
<dbReference type="PDB" id="8RVP">
    <property type="method" value="EM"/>
    <property type="resolution" value="2.28 A"/>
    <property type="chains" value="4/7=1-276"/>
</dbReference>
<dbReference type="PDB" id="8T08">
    <property type="method" value="EM"/>
    <property type="resolution" value="3.00 A"/>
    <property type="chains" value="O/f=1-276"/>
</dbReference>
<dbReference type="PDB" id="8U6Y">
    <property type="method" value="EM"/>
    <property type="resolution" value="2.80 A"/>
    <property type="chains" value="O/f=1-276"/>
</dbReference>
<dbReference type="PDBsum" id="4G4S"/>
<dbReference type="PDBsum" id="7LS6"/>
<dbReference type="PDBsum" id="7LSX"/>
<dbReference type="PDBsum" id="8RVL"/>
<dbReference type="PDBsum" id="8RVO"/>
<dbReference type="PDBsum" id="8RVP"/>
<dbReference type="PDBsum" id="8T08"/>
<dbReference type="PDBsum" id="8U6Y"/>
<dbReference type="EMDB" id="EMD-19523"/>
<dbReference type="EMDB" id="EMD-19527"/>
<dbReference type="EMDB" id="EMD-19528"/>
<dbReference type="EMDB" id="EMD-23503"/>
<dbReference type="EMDB" id="EMD-23508"/>
<dbReference type="EMDB" id="EMD-40938"/>
<dbReference type="EMDB" id="EMD-41963"/>
<dbReference type="SMR" id="Q05778"/>
<dbReference type="BioGRID" id="31468">
    <property type="interactions" value="125"/>
</dbReference>
<dbReference type="ComplexPortal" id="CPX-8171">
    <property type="entry name" value="PBA1-PBA2 proteasomal chaperone complex"/>
</dbReference>
<dbReference type="DIP" id="DIP-4796N"/>
<dbReference type="FunCoup" id="Q05778">
    <property type="interactions" value="54"/>
</dbReference>
<dbReference type="IntAct" id="Q05778">
    <property type="interactions" value="31"/>
</dbReference>
<dbReference type="MINT" id="Q05778"/>
<dbReference type="STRING" id="4932.YLR199C"/>
<dbReference type="iPTMnet" id="Q05778"/>
<dbReference type="PaxDb" id="4932-YLR199C"/>
<dbReference type="PeptideAtlas" id="Q05778"/>
<dbReference type="EnsemblFungi" id="YLR199C_mRNA">
    <property type="protein sequence ID" value="YLR199C"/>
    <property type="gene ID" value="YLR199C"/>
</dbReference>
<dbReference type="GeneID" id="850896"/>
<dbReference type="KEGG" id="sce:YLR199C"/>
<dbReference type="AGR" id="SGD:S000004189"/>
<dbReference type="SGD" id="S000004189">
    <property type="gene designation" value="PBA1"/>
</dbReference>
<dbReference type="VEuPathDB" id="FungiDB:YLR199C"/>
<dbReference type="eggNOG" id="ENOG502RY9B">
    <property type="taxonomic scope" value="Eukaryota"/>
</dbReference>
<dbReference type="HOGENOM" id="CLU_095376_0_0_1"/>
<dbReference type="InParanoid" id="Q05778"/>
<dbReference type="OMA" id="MLFKQWN"/>
<dbReference type="OrthoDB" id="4062897at2759"/>
<dbReference type="BioCyc" id="YEAST:G3O-32319-MONOMER"/>
<dbReference type="BioGRID-ORCS" id="850896">
    <property type="hits" value="0 hits in 10 CRISPR screens"/>
</dbReference>
<dbReference type="EvolutionaryTrace" id="Q05778"/>
<dbReference type="PRO" id="PR:Q05778"/>
<dbReference type="Proteomes" id="UP000002311">
    <property type="component" value="Chromosome XII"/>
</dbReference>
<dbReference type="RNAct" id="Q05778">
    <property type="molecule type" value="protein"/>
</dbReference>
<dbReference type="GO" id="GO:0005737">
    <property type="term" value="C:cytoplasm"/>
    <property type="evidence" value="ECO:0007005"/>
    <property type="project" value="SGD"/>
</dbReference>
<dbReference type="GO" id="GO:0043248">
    <property type="term" value="P:proteasome assembly"/>
    <property type="evidence" value="ECO:0000316"/>
    <property type="project" value="SGD"/>
</dbReference>
<dbReference type="FunFam" id="3.40.50.12120:FF:000001">
    <property type="entry name" value="Proteasome biogenesis-associated"/>
    <property type="match status" value="1"/>
</dbReference>
<dbReference type="Gene3D" id="3.40.50.12120">
    <property type="entry name" value="POC1 chaperone"/>
    <property type="match status" value="2"/>
</dbReference>
<dbReference type="InterPro" id="IPR038605">
    <property type="entry name" value="Pba1_sf"/>
</dbReference>
<dbReference type="InterPro" id="IPR018855">
    <property type="entry name" value="Psome_chaperone_1_fun"/>
</dbReference>
<dbReference type="Pfam" id="PF10450">
    <property type="entry name" value="POC1"/>
    <property type="match status" value="1"/>
</dbReference>
<name>POC1_YEAST</name>
<gene>
    <name type="primary">PBA1</name>
    <name type="synonym">POC1</name>
    <name type="ordered locus">YLR199C</name>
</gene>